<evidence type="ECO:0000255" key="1">
    <source>
        <dbReference type="HAMAP-Rule" id="MF_00354"/>
    </source>
</evidence>
<keyword id="KW-0963">Cytoplasm</keyword>
<keyword id="KW-0285">Flavoprotein</keyword>
<keyword id="KW-0288">FMN</keyword>
<keyword id="KW-0413">Isomerase</keyword>
<keyword id="KW-0414">Isoprene biosynthesis</keyword>
<keyword id="KW-0460">Magnesium</keyword>
<keyword id="KW-0479">Metal-binding</keyword>
<keyword id="KW-0521">NADP</keyword>
<name>IDI2_BACCZ</name>
<dbReference type="EC" id="5.3.3.2" evidence="1"/>
<dbReference type="EMBL" id="CP000001">
    <property type="protein sequence ID" value="AAU18868.1"/>
    <property type="molecule type" value="Genomic_DNA"/>
</dbReference>
<dbReference type="RefSeq" id="WP_000251054.1">
    <property type="nucleotide sequence ID" value="NC_006274.1"/>
</dbReference>
<dbReference type="SMR" id="Q63DN3"/>
<dbReference type="KEGG" id="bcz:BCE33L1380"/>
<dbReference type="PATRIC" id="fig|288681.22.peg.4171"/>
<dbReference type="Proteomes" id="UP000002612">
    <property type="component" value="Chromosome"/>
</dbReference>
<dbReference type="GO" id="GO:0005737">
    <property type="term" value="C:cytoplasm"/>
    <property type="evidence" value="ECO:0007669"/>
    <property type="project" value="UniProtKB-SubCell"/>
</dbReference>
<dbReference type="GO" id="GO:0010181">
    <property type="term" value="F:FMN binding"/>
    <property type="evidence" value="ECO:0007669"/>
    <property type="project" value="UniProtKB-UniRule"/>
</dbReference>
<dbReference type="GO" id="GO:0004452">
    <property type="term" value="F:isopentenyl-diphosphate delta-isomerase activity"/>
    <property type="evidence" value="ECO:0007669"/>
    <property type="project" value="UniProtKB-UniRule"/>
</dbReference>
<dbReference type="GO" id="GO:0000287">
    <property type="term" value="F:magnesium ion binding"/>
    <property type="evidence" value="ECO:0007669"/>
    <property type="project" value="UniProtKB-UniRule"/>
</dbReference>
<dbReference type="GO" id="GO:0070402">
    <property type="term" value="F:NADPH binding"/>
    <property type="evidence" value="ECO:0007669"/>
    <property type="project" value="UniProtKB-UniRule"/>
</dbReference>
<dbReference type="GO" id="GO:0016491">
    <property type="term" value="F:oxidoreductase activity"/>
    <property type="evidence" value="ECO:0007669"/>
    <property type="project" value="InterPro"/>
</dbReference>
<dbReference type="GO" id="GO:0008299">
    <property type="term" value="P:isoprenoid biosynthetic process"/>
    <property type="evidence" value="ECO:0007669"/>
    <property type="project" value="UniProtKB-UniRule"/>
</dbReference>
<dbReference type="CDD" id="cd02811">
    <property type="entry name" value="IDI-2_FMN"/>
    <property type="match status" value="1"/>
</dbReference>
<dbReference type="FunFam" id="3.20.20.70:FF:000115">
    <property type="entry name" value="Isopentenyl-diphosphate delta-isomerase"/>
    <property type="match status" value="1"/>
</dbReference>
<dbReference type="Gene3D" id="3.20.20.70">
    <property type="entry name" value="Aldolase class I"/>
    <property type="match status" value="1"/>
</dbReference>
<dbReference type="HAMAP" id="MF_00354">
    <property type="entry name" value="Idi_2"/>
    <property type="match status" value="1"/>
</dbReference>
<dbReference type="InterPro" id="IPR013785">
    <property type="entry name" value="Aldolase_TIM"/>
</dbReference>
<dbReference type="InterPro" id="IPR000262">
    <property type="entry name" value="FMN-dep_DH"/>
</dbReference>
<dbReference type="InterPro" id="IPR011179">
    <property type="entry name" value="IPdP_isomerase"/>
</dbReference>
<dbReference type="NCBIfam" id="TIGR02151">
    <property type="entry name" value="IPP_isom_2"/>
    <property type="match status" value="1"/>
</dbReference>
<dbReference type="PANTHER" id="PTHR43665">
    <property type="entry name" value="ISOPENTENYL-DIPHOSPHATE DELTA-ISOMERASE"/>
    <property type="match status" value="1"/>
</dbReference>
<dbReference type="PANTHER" id="PTHR43665:SF1">
    <property type="entry name" value="ISOPENTENYL-DIPHOSPHATE DELTA-ISOMERASE"/>
    <property type="match status" value="1"/>
</dbReference>
<dbReference type="Pfam" id="PF01070">
    <property type="entry name" value="FMN_dh"/>
    <property type="match status" value="1"/>
</dbReference>
<dbReference type="PIRSF" id="PIRSF003314">
    <property type="entry name" value="IPP_isomerase"/>
    <property type="match status" value="1"/>
</dbReference>
<dbReference type="SMART" id="SM01240">
    <property type="entry name" value="IMPDH"/>
    <property type="match status" value="1"/>
</dbReference>
<dbReference type="SUPFAM" id="SSF51395">
    <property type="entry name" value="FMN-linked oxidoreductases"/>
    <property type="match status" value="1"/>
</dbReference>
<accession>Q63DN3</accession>
<sequence>MVRAKRKLDHIEYALSTGQSRTHGFHDIDFVHQSLPNSSYETITCETKIGELSLSSPIFINAMTGGGGEKTLHINEQLAYVAKHHNLAMAVGSQMAALKDESEAASYKIIRKVNPNGIFFANLGSEATIEQAERAVDMIEANALQIHLNVIQELTMPEGDRDFTGVLQRIEKIVLNSKVPVIVKEVGFGMSKETMQQLASVGVTAIDIGGQGGTNFAAVENERRQRMLSYFNNWGIQTATSIIEATSTNNNLSFIASGGIQTALDVAKAIALGANTTAFAGYFLRILMEDGIEKLVDEIDLLHTDLKFIMTALGAKTIEELQSVPLVIKGETYHWLTQRGIDTTHYSRR</sequence>
<proteinExistence type="inferred from homology"/>
<protein>
    <recommendedName>
        <fullName evidence="1">Isopentenyl-diphosphate delta-isomerase</fullName>
        <shortName evidence="1">IPP isomerase</shortName>
        <ecNumber evidence="1">5.3.3.2</ecNumber>
    </recommendedName>
    <alternativeName>
        <fullName evidence="1">Isopentenyl diphosphate:dimethylallyl diphosphate isomerase</fullName>
    </alternativeName>
    <alternativeName>
        <fullName evidence="1">Isopentenyl pyrophosphate isomerase</fullName>
    </alternativeName>
    <alternativeName>
        <fullName evidence="1">Type 2 isopentenyl diphosphate isomerase</fullName>
        <shortName evidence="1">IDI-2</shortName>
    </alternativeName>
</protein>
<comment type="function">
    <text evidence="1">Involved in the biosynthesis of isoprenoids. Catalyzes the 1,3-allylic rearrangement of the homoallylic substrate isopentenyl (IPP) to its allylic isomer, dimethylallyl diphosphate (DMAPP).</text>
</comment>
<comment type="catalytic activity">
    <reaction evidence="1">
        <text>isopentenyl diphosphate = dimethylallyl diphosphate</text>
        <dbReference type="Rhea" id="RHEA:23284"/>
        <dbReference type="ChEBI" id="CHEBI:57623"/>
        <dbReference type="ChEBI" id="CHEBI:128769"/>
        <dbReference type="EC" id="5.3.3.2"/>
    </reaction>
</comment>
<comment type="cofactor">
    <cofactor evidence="1">
        <name>FMN</name>
        <dbReference type="ChEBI" id="CHEBI:58210"/>
    </cofactor>
</comment>
<comment type="cofactor">
    <cofactor evidence="1">
        <name>NADPH</name>
        <dbReference type="ChEBI" id="CHEBI:57783"/>
    </cofactor>
</comment>
<comment type="cofactor">
    <cofactor evidence="1">
        <name>Mg(2+)</name>
        <dbReference type="ChEBI" id="CHEBI:18420"/>
    </cofactor>
</comment>
<comment type="subunit">
    <text evidence="1">Homooctamer. Dimer of tetramers.</text>
</comment>
<comment type="subcellular location">
    <subcellularLocation>
        <location evidence="1">Cytoplasm</location>
    </subcellularLocation>
</comment>
<comment type="similarity">
    <text evidence="1">Belongs to the IPP isomerase type 2 family.</text>
</comment>
<organism>
    <name type="scientific">Bacillus cereus (strain ZK / E33L)</name>
    <dbReference type="NCBI Taxonomy" id="288681"/>
    <lineage>
        <taxon>Bacteria</taxon>
        <taxon>Bacillati</taxon>
        <taxon>Bacillota</taxon>
        <taxon>Bacilli</taxon>
        <taxon>Bacillales</taxon>
        <taxon>Bacillaceae</taxon>
        <taxon>Bacillus</taxon>
        <taxon>Bacillus cereus group</taxon>
    </lineage>
</organism>
<gene>
    <name evidence="1" type="primary">fni</name>
    <name type="ordered locus">BCE33L1380</name>
</gene>
<feature type="chain" id="PRO_0000229497" description="Isopentenyl-diphosphate delta-isomerase">
    <location>
        <begin position="1"/>
        <end position="349"/>
    </location>
</feature>
<feature type="binding site" evidence="1">
    <location>
        <begin position="6"/>
        <end position="7"/>
    </location>
    <ligand>
        <name>substrate</name>
    </ligand>
</feature>
<feature type="binding site" evidence="1">
    <location>
        <begin position="62"/>
        <end position="64"/>
    </location>
    <ligand>
        <name>FMN</name>
        <dbReference type="ChEBI" id="CHEBI:58210"/>
    </ligand>
</feature>
<feature type="binding site" evidence="1">
    <location>
        <position position="93"/>
    </location>
    <ligand>
        <name>FMN</name>
        <dbReference type="ChEBI" id="CHEBI:58210"/>
    </ligand>
</feature>
<feature type="binding site" evidence="1">
    <location>
        <position position="122"/>
    </location>
    <ligand>
        <name>FMN</name>
        <dbReference type="ChEBI" id="CHEBI:58210"/>
    </ligand>
</feature>
<feature type="binding site" evidence="1">
    <location>
        <position position="152"/>
    </location>
    <ligand>
        <name>substrate</name>
    </ligand>
</feature>
<feature type="binding site" evidence="1">
    <location>
        <position position="153"/>
    </location>
    <ligand>
        <name>Mg(2+)</name>
        <dbReference type="ChEBI" id="CHEBI:18420"/>
    </ligand>
</feature>
<feature type="binding site" evidence="1">
    <location>
        <position position="184"/>
    </location>
    <ligand>
        <name>FMN</name>
        <dbReference type="ChEBI" id="CHEBI:58210"/>
    </ligand>
</feature>
<feature type="binding site" evidence="1">
    <location>
        <position position="214"/>
    </location>
    <ligand>
        <name>FMN</name>
        <dbReference type="ChEBI" id="CHEBI:58210"/>
    </ligand>
</feature>
<feature type="binding site" evidence="1">
    <location>
        <begin position="258"/>
        <end position="259"/>
    </location>
    <ligand>
        <name>FMN</name>
        <dbReference type="ChEBI" id="CHEBI:58210"/>
    </ligand>
</feature>
<feature type="binding site" evidence="1">
    <location>
        <begin position="280"/>
        <end position="281"/>
    </location>
    <ligand>
        <name>FMN</name>
        <dbReference type="ChEBI" id="CHEBI:58210"/>
    </ligand>
</feature>
<reference key="1">
    <citation type="journal article" date="2006" name="J. Bacteriol.">
        <title>Pathogenomic sequence analysis of Bacillus cereus and Bacillus thuringiensis isolates closely related to Bacillus anthracis.</title>
        <authorList>
            <person name="Han C.S."/>
            <person name="Xie G."/>
            <person name="Challacombe J.F."/>
            <person name="Altherr M.R."/>
            <person name="Bhotika S.S."/>
            <person name="Bruce D."/>
            <person name="Campbell C.S."/>
            <person name="Campbell M.L."/>
            <person name="Chen J."/>
            <person name="Chertkov O."/>
            <person name="Cleland C."/>
            <person name="Dimitrijevic M."/>
            <person name="Doggett N.A."/>
            <person name="Fawcett J.J."/>
            <person name="Glavina T."/>
            <person name="Goodwin L.A."/>
            <person name="Hill K.K."/>
            <person name="Hitchcock P."/>
            <person name="Jackson P.J."/>
            <person name="Keim P."/>
            <person name="Kewalramani A.R."/>
            <person name="Longmire J."/>
            <person name="Lucas S."/>
            <person name="Malfatti S."/>
            <person name="McMurry K."/>
            <person name="Meincke L.J."/>
            <person name="Misra M."/>
            <person name="Moseman B.L."/>
            <person name="Mundt M."/>
            <person name="Munk A.C."/>
            <person name="Okinaka R.T."/>
            <person name="Parson-Quintana B."/>
            <person name="Reilly L.P."/>
            <person name="Richardson P."/>
            <person name="Robinson D.L."/>
            <person name="Rubin E."/>
            <person name="Saunders E."/>
            <person name="Tapia R."/>
            <person name="Tesmer J.G."/>
            <person name="Thayer N."/>
            <person name="Thompson L.S."/>
            <person name="Tice H."/>
            <person name="Ticknor L.O."/>
            <person name="Wills P.L."/>
            <person name="Brettin T.S."/>
            <person name="Gilna P."/>
        </authorList>
    </citation>
    <scope>NUCLEOTIDE SEQUENCE [LARGE SCALE GENOMIC DNA]</scope>
    <source>
        <strain>ZK / E33L</strain>
    </source>
</reference>